<accession>Q8ERY0</accession>
<proteinExistence type="inferred from homology"/>
<organism>
    <name type="scientific">Oceanobacillus iheyensis (strain DSM 14371 / CIP 107618 / JCM 11309 / KCTC 3954 / HTE831)</name>
    <dbReference type="NCBI Taxonomy" id="221109"/>
    <lineage>
        <taxon>Bacteria</taxon>
        <taxon>Bacillati</taxon>
        <taxon>Bacillota</taxon>
        <taxon>Bacilli</taxon>
        <taxon>Bacillales</taxon>
        <taxon>Bacillaceae</taxon>
        <taxon>Oceanobacillus</taxon>
    </lineage>
</organism>
<protein>
    <recommendedName>
        <fullName evidence="1">Uroporphyrinogen decarboxylase</fullName>
        <shortName evidence="1">UPD</shortName>
        <shortName evidence="1">URO-D</shortName>
        <ecNumber evidence="1">4.1.1.37</ecNumber>
    </recommendedName>
</protein>
<sequence>MSIIKNDTIIKAYQGEETDYTPAWFMRQAGRSQPEYRALKEKYSLFEITHQPELCAYVTRLPVENYGTDAAILYKDIMSPLPYIGVDVEIKSGIGPVIHNPIRNLQDVEKLGVINPVSDVPYVLDTIRLLTEEQLEVPLIGFSGAPFTLASYMIEGGPSKNYSKTKALMYREPETWFALMDKLSDMIISYVDAQVEAGAKAIQIFDSWVGSLNAEDYRVFIKPVMTRIFSELRRHEVPLITFGVGARHLLMEWNDLPVDVIGLDWRTSINEAREMGVTKVVQGNLDPAILLSDWQTIEQRTKQILDQGMQSGKHVFNLGHGVTPDIEPATLKKLTELVHNYSKQK</sequence>
<evidence type="ECO:0000255" key="1">
    <source>
        <dbReference type="HAMAP-Rule" id="MF_00218"/>
    </source>
</evidence>
<dbReference type="EC" id="4.1.1.37" evidence="1"/>
<dbReference type="EMBL" id="BA000028">
    <property type="protein sequence ID" value="BAC13123.1"/>
    <property type="molecule type" value="Genomic_DNA"/>
</dbReference>
<dbReference type="RefSeq" id="WP_011065567.1">
    <property type="nucleotide sequence ID" value="NC_004193.1"/>
</dbReference>
<dbReference type="SMR" id="Q8ERY0"/>
<dbReference type="STRING" id="221109.gene:10733406"/>
<dbReference type="KEGG" id="oih:OB1167"/>
<dbReference type="eggNOG" id="COG0407">
    <property type="taxonomic scope" value="Bacteria"/>
</dbReference>
<dbReference type="HOGENOM" id="CLU_040933_0_1_9"/>
<dbReference type="OrthoDB" id="9806656at2"/>
<dbReference type="PhylomeDB" id="Q8ERY0"/>
<dbReference type="UniPathway" id="UPA00251">
    <property type="reaction ID" value="UER00321"/>
</dbReference>
<dbReference type="Proteomes" id="UP000000822">
    <property type="component" value="Chromosome"/>
</dbReference>
<dbReference type="GO" id="GO:0005829">
    <property type="term" value="C:cytosol"/>
    <property type="evidence" value="ECO:0007669"/>
    <property type="project" value="TreeGrafter"/>
</dbReference>
<dbReference type="GO" id="GO:0004853">
    <property type="term" value="F:uroporphyrinogen decarboxylase activity"/>
    <property type="evidence" value="ECO:0007669"/>
    <property type="project" value="UniProtKB-UniRule"/>
</dbReference>
<dbReference type="GO" id="GO:0006782">
    <property type="term" value="P:protoporphyrinogen IX biosynthetic process"/>
    <property type="evidence" value="ECO:0007669"/>
    <property type="project" value="UniProtKB-UniRule"/>
</dbReference>
<dbReference type="CDD" id="cd00717">
    <property type="entry name" value="URO-D"/>
    <property type="match status" value="1"/>
</dbReference>
<dbReference type="FunFam" id="3.20.20.210:FF:000005">
    <property type="entry name" value="Uroporphyrinogen decarboxylase"/>
    <property type="match status" value="1"/>
</dbReference>
<dbReference type="Gene3D" id="3.20.20.210">
    <property type="match status" value="1"/>
</dbReference>
<dbReference type="HAMAP" id="MF_00218">
    <property type="entry name" value="URO_D"/>
    <property type="match status" value="1"/>
</dbReference>
<dbReference type="InterPro" id="IPR038071">
    <property type="entry name" value="UROD/MetE-like_sf"/>
</dbReference>
<dbReference type="InterPro" id="IPR006361">
    <property type="entry name" value="Uroporphyrinogen_deCO2ase_HemE"/>
</dbReference>
<dbReference type="InterPro" id="IPR000257">
    <property type="entry name" value="Uroporphyrinogen_deCOase"/>
</dbReference>
<dbReference type="NCBIfam" id="TIGR01464">
    <property type="entry name" value="hemE"/>
    <property type="match status" value="1"/>
</dbReference>
<dbReference type="PANTHER" id="PTHR21091">
    <property type="entry name" value="METHYLTETRAHYDROFOLATE:HOMOCYSTEINE METHYLTRANSFERASE RELATED"/>
    <property type="match status" value="1"/>
</dbReference>
<dbReference type="PANTHER" id="PTHR21091:SF169">
    <property type="entry name" value="UROPORPHYRINOGEN DECARBOXYLASE"/>
    <property type="match status" value="1"/>
</dbReference>
<dbReference type="Pfam" id="PF01208">
    <property type="entry name" value="URO-D"/>
    <property type="match status" value="1"/>
</dbReference>
<dbReference type="SUPFAM" id="SSF51726">
    <property type="entry name" value="UROD/MetE-like"/>
    <property type="match status" value="1"/>
</dbReference>
<dbReference type="PROSITE" id="PS00906">
    <property type="entry name" value="UROD_1"/>
    <property type="match status" value="1"/>
</dbReference>
<dbReference type="PROSITE" id="PS00907">
    <property type="entry name" value="UROD_2"/>
    <property type="match status" value="1"/>
</dbReference>
<comment type="function">
    <text evidence="1">Catalyzes the decarboxylation of four acetate groups of uroporphyrinogen-III to yield coproporphyrinogen-III.</text>
</comment>
<comment type="catalytic activity">
    <reaction evidence="1">
        <text>uroporphyrinogen III + 4 H(+) = coproporphyrinogen III + 4 CO2</text>
        <dbReference type="Rhea" id="RHEA:19865"/>
        <dbReference type="ChEBI" id="CHEBI:15378"/>
        <dbReference type="ChEBI" id="CHEBI:16526"/>
        <dbReference type="ChEBI" id="CHEBI:57308"/>
        <dbReference type="ChEBI" id="CHEBI:57309"/>
        <dbReference type="EC" id="4.1.1.37"/>
    </reaction>
</comment>
<comment type="pathway">
    <text evidence="1">Porphyrin-containing compound metabolism; protoporphyrin-IX biosynthesis; coproporphyrinogen-III from 5-aminolevulinate: step 4/4.</text>
</comment>
<comment type="subunit">
    <text evidence="1">Homodimer.</text>
</comment>
<comment type="subcellular location">
    <subcellularLocation>
        <location evidence="1">Cytoplasm</location>
    </subcellularLocation>
</comment>
<comment type="similarity">
    <text evidence="1">Belongs to the uroporphyrinogen decarboxylase family.</text>
</comment>
<feature type="chain" id="PRO_0000187620" description="Uroporphyrinogen decarboxylase">
    <location>
        <begin position="1"/>
        <end position="345"/>
    </location>
</feature>
<feature type="binding site" evidence="1">
    <location>
        <begin position="27"/>
        <end position="31"/>
    </location>
    <ligand>
        <name>substrate</name>
    </ligand>
</feature>
<feature type="binding site" evidence="1">
    <location>
        <position position="46"/>
    </location>
    <ligand>
        <name>substrate</name>
    </ligand>
</feature>
<feature type="binding site" evidence="1">
    <location>
        <position position="76"/>
    </location>
    <ligand>
        <name>substrate</name>
    </ligand>
</feature>
<feature type="binding site" evidence="1">
    <location>
        <position position="152"/>
    </location>
    <ligand>
        <name>substrate</name>
    </ligand>
</feature>
<feature type="binding site" evidence="1">
    <location>
        <position position="207"/>
    </location>
    <ligand>
        <name>substrate</name>
    </ligand>
</feature>
<feature type="binding site" evidence="1">
    <location>
        <position position="320"/>
    </location>
    <ligand>
        <name>substrate</name>
    </ligand>
</feature>
<feature type="site" description="Transition state stabilizer" evidence="1">
    <location>
        <position position="76"/>
    </location>
</feature>
<keyword id="KW-0963">Cytoplasm</keyword>
<keyword id="KW-0210">Decarboxylase</keyword>
<keyword id="KW-0456">Lyase</keyword>
<keyword id="KW-0627">Porphyrin biosynthesis</keyword>
<keyword id="KW-1185">Reference proteome</keyword>
<reference key="1">
    <citation type="journal article" date="2002" name="Nucleic Acids Res.">
        <title>Genome sequence of Oceanobacillus iheyensis isolated from the Iheya Ridge and its unexpected adaptive capabilities to extreme environments.</title>
        <authorList>
            <person name="Takami H."/>
            <person name="Takaki Y."/>
            <person name="Uchiyama I."/>
        </authorList>
    </citation>
    <scope>NUCLEOTIDE SEQUENCE [LARGE SCALE GENOMIC DNA]</scope>
    <source>
        <strain>DSM 14371 / CIP 107618 / JCM 11309 / KCTC 3954 / HTE831</strain>
    </source>
</reference>
<gene>
    <name evidence="1" type="primary">hemE</name>
    <name type="ordered locus">OB1167</name>
</gene>
<name>DCUP_OCEIH</name>